<reference key="1">
    <citation type="journal article" date="2003" name="J. Bacteriol.">
        <title>Complete genome sequence of the ammonia-oxidizing bacterium and obligate chemolithoautotroph Nitrosomonas europaea.</title>
        <authorList>
            <person name="Chain P."/>
            <person name="Lamerdin J.E."/>
            <person name="Larimer F.W."/>
            <person name="Regala W."/>
            <person name="Lao V."/>
            <person name="Land M.L."/>
            <person name="Hauser L."/>
            <person name="Hooper A.B."/>
            <person name="Klotz M.G."/>
            <person name="Norton J."/>
            <person name="Sayavedra-Soto L.A."/>
            <person name="Arciero D.M."/>
            <person name="Hommes N.G."/>
            <person name="Whittaker M.M."/>
            <person name="Arp D.J."/>
        </authorList>
    </citation>
    <scope>NUCLEOTIDE SEQUENCE [LARGE SCALE GENOMIC DNA]</scope>
    <source>
        <strain>ATCC 19718 / CIP 103999 / KCTC 2705 / NBRC 14298</strain>
    </source>
</reference>
<reference key="2">
    <citation type="journal article" date="2014" name="J. Biol. Chem.">
        <title>Three different classes of aminotransferases evolved prephenate aminotransferase functionality in arogenate-competent microorganisms.</title>
        <authorList>
            <person name="Graindorge M."/>
            <person name="Giustini C."/>
            <person name="Kraut A."/>
            <person name="Moyet L."/>
            <person name="Curien G."/>
            <person name="Matringe M."/>
        </authorList>
    </citation>
    <scope>FUNCTION</scope>
    <scope>CATALYTIC ACTIVITY</scope>
    <scope>BIOPHYSICOCHEMICAL PROPERTIES</scope>
    <source>
        <strain>RCR2011</strain>
    </source>
</reference>
<keyword id="KW-0032">Aminotransferase</keyword>
<keyword id="KW-0963">Cytoplasm</keyword>
<keyword id="KW-0663">Pyridoxal phosphate</keyword>
<keyword id="KW-1185">Reference proteome</keyword>
<keyword id="KW-0808">Transferase</keyword>
<name>AAPAT_NITEU</name>
<proteinExistence type="evidence at protein level"/>
<dbReference type="EC" id="2.6.1.1" evidence="3"/>
<dbReference type="EC" id="2.6.1.79" evidence="3"/>
<dbReference type="EMBL" id="AL954747">
    <property type="protein sequence ID" value="CAD84697.1"/>
    <property type="molecule type" value="Genomic_DNA"/>
</dbReference>
<dbReference type="RefSeq" id="WP_011111398.1">
    <property type="nucleotide sequence ID" value="NC_004757.1"/>
</dbReference>
<dbReference type="SMR" id="Q82WA8"/>
<dbReference type="STRING" id="228410.NE0786"/>
<dbReference type="GeneID" id="87103979"/>
<dbReference type="KEGG" id="neu:NE0786"/>
<dbReference type="eggNOG" id="COG0436">
    <property type="taxonomic scope" value="Bacteria"/>
</dbReference>
<dbReference type="HOGENOM" id="CLU_017584_4_3_4"/>
<dbReference type="OrthoDB" id="9803354at2"/>
<dbReference type="PhylomeDB" id="Q82WA8"/>
<dbReference type="Proteomes" id="UP000001416">
    <property type="component" value="Chromosome"/>
</dbReference>
<dbReference type="GO" id="GO:0005737">
    <property type="term" value="C:cytoplasm"/>
    <property type="evidence" value="ECO:0007669"/>
    <property type="project" value="UniProtKB-SubCell"/>
</dbReference>
<dbReference type="GO" id="GO:0033854">
    <property type="term" value="F:glutamate-prephenate aminotransferase activity"/>
    <property type="evidence" value="ECO:0007669"/>
    <property type="project" value="UniProtKB-EC"/>
</dbReference>
<dbReference type="GO" id="GO:0004069">
    <property type="term" value="F:L-aspartate:2-oxoglutarate aminotransferase activity"/>
    <property type="evidence" value="ECO:0007669"/>
    <property type="project" value="UniProtKB-EC"/>
</dbReference>
<dbReference type="GO" id="GO:0030170">
    <property type="term" value="F:pyridoxal phosphate binding"/>
    <property type="evidence" value="ECO:0007669"/>
    <property type="project" value="InterPro"/>
</dbReference>
<dbReference type="GO" id="GO:0006520">
    <property type="term" value="P:amino acid metabolic process"/>
    <property type="evidence" value="ECO:0007669"/>
    <property type="project" value="InterPro"/>
</dbReference>
<dbReference type="GO" id="GO:0009058">
    <property type="term" value="P:biosynthetic process"/>
    <property type="evidence" value="ECO:0007669"/>
    <property type="project" value="InterPro"/>
</dbReference>
<dbReference type="CDD" id="cd00609">
    <property type="entry name" value="AAT_like"/>
    <property type="match status" value="1"/>
</dbReference>
<dbReference type="FunFam" id="3.40.640.10:FF:000033">
    <property type="entry name" value="Aspartate aminotransferase"/>
    <property type="match status" value="1"/>
</dbReference>
<dbReference type="Gene3D" id="3.90.1150.10">
    <property type="entry name" value="Aspartate Aminotransferase, domain 1"/>
    <property type="match status" value="1"/>
</dbReference>
<dbReference type="Gene3D" id="3.40.640.10">
    <property type="entry name" value="Type I PLP-dependent aspartate aminotransferase-like (Major domain)"/>
    <property type="match status" value="1"/>
</dbReference>
<dbReference type="InterPro" id="IPR004839">
    <property type="entry name" value="Aminotransferase_I/II_large"/>
</dbReference>
<dbReference type="InterPro" id="IPR050596">
    <property type="entry name" value="AspAT/PAT-like"/>
</dbReference>
<dbReference type="InterPro" id="IPR004838">
    <property type="entry name" value="NHTrfase_class1_PyrdxlP-BS"/>
</dbReference>
<dbReference type="InterPro" id="IPR015424">
    <property type="entry name" value="PyrdxlP-dep_Trfase"/>
</dbReference>
<dbReference type="InterPro" id="IPR015421">
    <property type="entry name" value="PyrdxlP-dep_Trfase_major"/>
</dbReference>
<dbReference type="InterPro" id="IPR015422">
    <property type="entry name" value="PyrdxlP-dep_Trfase_small"/>
</dbReference>
<dbReference type="PANTHER" id="PTHR46383">
    <property type="entry name" value="ASPARTATE AMINOTRANSFERASE"/>
    <property type="match status" value="1"/>
</dbReference>
<dbReference type="PANTHER" id="PTHR46383:SF1">
    <property type="entry name" value="ASPARTATE AMINOTRANSFERASE"/>
    <property type="match status" value="1"/>
</dbReference>
<dbReference type="Pfam" id="PF00155">
    <property type="entry name" value="Aminotran_1_2"/>
    <property type="match status" value="1"/>
</dbReference>
<dbReference type="SUPFAM" id="SSF53383">
    <property type="entry name" value="PLP-dependent transferases"/>
    <property type="match status" value="1"/>
</dbReference>
<dbReference type="PROSITE" id="PS00105">
    <property type="entry name" value="AA_TRANSFER_CLASS_1"/>
    <property type="match status" value="1"/>
</dbReference>
<organism>
    <name type="scientific">Nitrosomonas europaea (strain ATCC 19718 / CIP 103999 / KCTC 2705 / NBRC 14298)</name>
    <dbReference type="NCBI Taxonomy" id="228410"/>
    <lineage>
        <taxon>Bacteria</taxon>
        <taxon>Pseudomonadati</taxon>
        <taxon>Pseudomonadota</taxon>
        <taxon>Betaproteobacteria</taxon>
        <taxon>Nitrosomonadales</taxon>
        <taxon>Nitrosomonadaceae</taxon>
        <taxon>Nitrosomonas</taxon>
    </lineage>
</organism>
<gene>
    <name evidence="5" type="primary">aatA</name>
    <name evidence="5" type="ordered locus">NE0786</name>
</gene>
<accession>Q82WA8</accession>
<protein>
    <recommendedName>
        <fullName evidence="4">Aspartate/prephenate aminotransferase</fullName>
        <shortName evidence="4">AspAT / PAT</shortName>
        <ecNumber evidence="3">2.6.1.1</ecNumber>
        <ecNumber evidence="3">2.6.1.79</ecNumber>
    </recommendedName>
</protein>
<comment type="function">
    <text evidence="3">Catalyzes the reversible conversion of aspartate and 2-oxoglutarate to glutamate and oxaloacetate (PubMed:24302739). Can also transaminate prephenate in the presence of glutamate, with lower efficiency (PubMed:24302739).</text>
</comment>
<comment type="catalytic activity">
    <reaction evidence="3">
        <text>L-aspartate + 2-oxoglutarate = oxaloacetate + L-glutamate</text>
        <dbReference type="Rhea" id="RHEA:21824"/>
        <dbReference type="ChEBI" id="CHEBI:16452"/>
        <dbReference type="ChEBI" id="CHEBI:16810"/>
        <dbReference type="ChEBI" id="CHEBI:29985"/>
        <dbReference type="ChEBI" id="CHEBI:29991"/>
        <dbReference type="EC" id="2.6.1.1"/>
    </reaction>
</comment>
<comment type="catalytic activity">
    <reaction evidence="3">
        <text>L-arogenate + 2-oxoglutarate = prephenate + L-glutamate</text>
        <dbReference type="Rhea" id="RHEA:22880"/>
        <dbReference type="ChEBI" id="CHEBI:16810"/>
        <dbReference type="ChEBI" id="CHEBI:29934"/>
        <dbReference type="ChEBI" id="CHEBI:29985"/>
        <dbReference type="ChEBI" id="CHEBI:58180"/>
        <dbReference type="EC" id="2.6.1.79"/>
    </reaction>
</comment>
<comment type="cofactor">
    <cofactor evidence="2">
        <name>pyridoxal 5'-phosphate</name>
        <dbReference type="ChEBI" id="CHEBI:597326"/>
    </cofactor>
</comment>
<comment type="biophysicochemical properties">
    <kinetics>
        <KM evidence="3">35 uM for oxaloacetate</KM>
        <KM evidence="3">400 uM for prephenate</KM>
        <text evidence="3">kcat is 33 sec(-1) with oxaloacetate as substrate. kcat is 0.8 sec(-1) with prephenate as substrate.</text>
    </kinetics>
</comment>
<comment type="subunit">
    <text evidence="2">Homodimer.</text>
</comment>
<comment type="subcellular location">
    <subcellularLocation>
        <location evidence="4">Cytoplasm</location>
    </subcellularLocation>
</comment>
<comment type="similarity">
    <text evidence="4">Belongs to the class-I pyridoxal-phosphate-dependent aminotransferase family.</text>
</comment>
<sequence length="397" mass="42755">MKLSQRVQAIKPSPTLAVTAKAARLKAEGKNIIGLGAGEPDFDTPLHIKDAAITAIRNGFTKYTAVGGTASLKQAIISKFKRENSLEFMPGEILVSSGGKQSFFNLVLATIDPGDEVIIPAPYWVSYPDIVLIAEGKPVFIDTGIEEKFKISPDQLEKAITPRTRMFVVNSPSNPSGSVYSLEELQALGAVLRKYPDILIATDDMYEHILLSGDGFVNILNACPDLKARTVVLNGVSKAYAMTGWRIGYCGGPAAIITAMENIQSQSTSNPNSIAQVAAEAALNGDQSCMVPMIEAFRERNQFLTNALNSIAGIHCLLSEGAFYAFVDVRQAISRLNTQQILQNSSDIAFCNYVLEKAEVAAVPGSAFGCEGYMRLSFATSMDNLQEAVKRIASLLS</sequence>
<feature type="chain" id="PRO_0000448261" description="Aspartate/prephenate aminotransferase">
    <location>
        <begin position="1"/>
        <end position="397"/>
    </location>
</feature>
<feature type="binding site" evidence="1">
    <location>
        <position position="38"/>
    </location>
    <ligand>
        <name>L-aspartate</name>
        <dbReference type="ChEBI" id="CHEBI:29991"/>
    </ligand>
</feature>
<feature type="binding site" evidence="2">
    <location>
        <position position="124"/>
    </location>
    <ligand>
        <name>L-aspartate</name>
        <dbReference type="ChEBI" id="CHEBI:29991"/>
    </ligand>
</feature>
<feature type="binding site" evidence="2">
    <location>
        <position position="174"/>
    </location>
    <ligand>
        <name>L-aspartate</name>
        <dbReference type="ChEBI" id="CHEBI:29991"/>
    </ligand>
</feature>
<feature type="binding site" evidence="2">
    <location>
        <position position="375"/>
    </location>
    <ligand>
        <name>L-aspartate</name>
        <dbReference type="ChEBI" id="CHEBI:29991"/>
    </ligand>
</feature>
<feature type="site" description="Important for prephenate aminotransferase activity" evidence="2">
    <location>
        <position position="11"/>
    </location>
</feature>
<feature type="modified residue" description="N6-(pyridoxal phosphate)lysine" evidence="2">
    <location>
        <position position="238"/>
    </location>
</feature>
<evidence type="ECO:0000250" key="1">
    <source>
        <dbReference type="UniProtKB" id="P00509"/>
    </source>
</evidence>
<evidence type="ECO:0000250" key="2">
    <source>
        <dbReference type="UniProtKB" id="Q56232"/>
    </source>
</evidence>
<evidence type="ECO:0000269" key="3">
    <source>
    </source>
</evidence>
<evidence type="ECO:0000305" key="4"/>
<evidence type="ECO:0000312" key="5">
    <source>
        <dbReference type="EMBL" id="CAD84697.1"/>
    </source>
</evidence>